<evidence type="ECO:0000250" key="1"/>
<evidence type="ECO:0000255" key="2"/>
<evidence type="ECO:0000255" key="3">
    <source>
        <dbReference type="PROSITE-ProRule" id="PRU00031"/>
    </source>
</evidence>
<evidence type="ECO:0000269" key="4">
    <source>
    </source>
</evidence>
<evidence type="ECO:0000305" key="5"/>
<evidence type="ECO:0000305" key="6">
    <source>
    </source>
</evidence>
<name>VKT3_WALAE</name>
<sequence length="81" mass="8854">MSSGCLLLLLGLLTLWAELTPVSGRPRLCELPAESGLCNAYIPSFYYNPHSHKCQKFMYGGCGGNANNFKTIVECHRTCVG</sequence>
<reference key="1">
    <citation type="journal article" date="2008" name="Toxicon">
        <title>Cloning, characterization and phylogenetic analyses of members of three major venom families from a single specimen of Walterinnesia aegyptia.</title>
        <authorList>
            <person name="Tsai H.-Y."/>
            <person name="Wang Y.M."/>
            <person name="Tsai I.-H."/>
        </authorList>
    </citation>
    <scope>NUCLEOTIDE SEQUENCE [MRNA]</scope>
    <source>
        <tissue>Venom gland</tissue>
    </source>
</reference>
<reference key="2">
    <citation type="journal article" date="2022" name="Br. J. Pharmacol.">
        <title>A new Kunitz-type snake toxin family associated with an original mode of interaction with the vasopressin 2 receptor.</title>
        <authorList>
            <person name="Droctove L."/>
            <person name="Ciolek J."/>
            <person name="Mendre C."/>
            <person name="Chorfa A."/>
            <person name="Huerta P."/>
            <person name="Carvalho C."/>
            <person name="Gouin C."/>
            <person name="Lancien M."/>
            <person name="Stanajic-Petrovic G."/>
            <person name="Braco L."/>
            <person name="Blanchet G."/>
            <person name="Upert G."/>
            <person name="De Pauw G."/>
            <person name="Barbe P."/>
            <person name="Keck M."/>
            <person name="Mourier G."/>
            <person name="Mouillac B."/>
            <person name="Denis S."/>
            <person name="Rodriguez de la Vega R.C."/>
            <person name="Quinton L."/>
            <person name="Gilles N."/>
        </authorList>
    </citation>
    <scope>SYNTHESIS</scope>
</reference>
<dbReference type="EMBL" id="EU196559">
    <property type="protein sequence ID" value="ABX82868.1"/>
    <property type="molecule type" value="mRNA"/>
</dbReference>
<dbReference type="SMR" id="C1IC51"/>
<dbReference type="MEROPS" id="I02.055"/>
<dbReference type="GO" id="GO:0005576">
    <property type="term" value="C:extracellular region"/>
    <property type="evidence" value="ECO:0007669"/>
    <property type="project" value="UniProtKB-SubCell"/>
</dbReference>
<dbReference type="GO" id="GO:0004867">
    <property type="term" value="F:serine-type endopeptidase inhibitor activity"/>
    <property type="evidence" value="ECO:0007669"/>
    <property type="project" value="UniProtKB-KW"/>
</dbReference>
<dbReference type="GO" id="GO:0090729">
    <property type="term" value="F:toxin activity"/>
    <property type="evidence" value="ECO:0007669"/>
    <property type="project" value="UniProtKB-KW"/>
</dbReference>
<dbReference type="CDD" id="cd22594">
    <property type="entry name" value="Kunitz_textilinin-like"/>
    <property type="match status" value="1"/>
</dbReference>
<dbReference type="FunFam" id="4.10.410.10:FF:000021">
    <property type="entry name" value="Serine protease inhibitor, putative"/>
    <property type="match status" value="1"/>
</dbReference>
<dbReference type="Gene3D" id="4.10.410.10">
    <property type="entry name" value="Pancreatic trypsin inhibitor Kunitz domain"/>
    <property type="match status" value="1"/>
</dbReference>
<dbReference type="InterPro" id="IPR002223">
    <property type="entry name" value="Kunitz_BPTI"/>
</dbReference>
<dbReference type="InterPro" id="IPR036880">
    <property type="entry name" value="Kunitz_BPTI_sf"/>
</dbReference>
<dbReference type="InterPro" id="IPR020901">
    <property type="entry name" value="Prtase_inh_Kunz-CS"/>
</dbReference>
<dbReference type="InterPro" id="IPR050098">
    <property type="entry name" value="TFPI/VKTCI-like"/>
</dbReference>
<dbReference type="PANTHER" id="PTHR10083">
    <property type="entry name" value="KUNITZ-TYPE PROTEASE INHIBITOR-RELATED"/>
    <property type="match status" value="1"/>
</dbReference>
<dbReference type="Pfam" id="PF00014">
    <property type="entry name" value="Kunitz_BPTI"/>
    <property type="match status" value="1"/>
</dbReference>
<dbReference type="PRINTS" id="PR00759">
    <property type="entry name" value="BASICPTASE"/>
</dbReference>
<dbReference type="SMART" id="SM00131">
    <property type="entry name" value="KU"/>
    <property type="match status" value="1"/>
</dbReference>
<dbReference type="SUPFAM" id="SSF57362">
    <property type="entry name" value="BPTI-like"/>
    <property type="match status" value="1"/>
</dbReference>
<dbReference type="PROSITE" id="PS00280">
    <property type="entry name" value="BPTI_KUNITZ_1"/>
    <property type="match status" value="1"/>
</dbReference>
<dbReference type="PROSITE" id="PS50279">
    <property type="entry name" value="BPTI_KUNITZ_2"/>
    <property type="match status" value="1"/>
</dbReference>
<organism>
    <name type="scientific">Walterinnesia aegyptia</name>
    <name type="common">Desert black snake</name>
    <dbReference type="NCBI Taxonomy" id="64182"/>
    <lineage>
        <taxon>Eukaryota</taxon>
        <taxon>Metazoa</taxon>
        <taxon>Chordata</taxon>
        <taxon>Craniata</taxon>
        <taxon>Vertebrata</taxon>
        <taxon>Euteleostomi</taxon>
        <taxon>Lepidosauria</taxon>
        <taxon>Squamata</taxon>
        <taxon>Bifurcata</taxon>
        <taxon>Unidentata</taxon>
        <taxon>Episquamata</taxon>
        <taxon>Toxicofera</taxon>
        <taxon>Serpentes</taxon>
        <taxon>Colubroidea</taxon>
        <taxon>Elapidae</taxon>
        <taxon>Elapinae</taxon>
        <taxon>Walterinnesia</taxon>
    </lineage>
</organism>
<proteinExistence type="inferred from homology"/>
<accession>C1IC51</accession>
<feature type="signal peptide" evidence="2">
    <location>
        <begin position="1"/>
        <end position="24"/>
    </location>
</feature>
<feature type="chain" id="PRO_0000419229" description="Protease inhibitor 3">
    <location>
        <begin position="25"/>
        <end position="81"/>
    </location>
</feature>
<feature type="domain" description="BPTI/Kunitz inhibitor" evidence="3">
    <location>
        <begin position="29"/>
        <end position="79"/>
    </location>
</feature>
<feature type="disulfide bond" evidence="3">
    <location>
        <begin position="29"/>
        <end position="79"/>
    </location>
</feature>
<feature type="disulfide bond" evidence="3">
    <location>
        <begin position="38"/>
        <end position="62"/>
    </location>
</feature>
<feature type="disulfide bond" evidence="3">
    <location>
        <begin position="54"/>
        <end position="75"/>
    </location>
</feature>
<protein>
    <recommendedName>
        <fullName>Protease inhibitor 3</fullName>
    </recommendedName>
    <alternativeName>
        <fullName>Kunitz inhibitor KIn-III</fullName>
    </alternativeName>
</protein>
<comment type="function">
    <text evidence="1">Snake venom serine protease inhibitor.</text>
</comment>
<comment type="subcellular location">
    <subcellularLocation>
        <location evidence="6">Secreted</location>
    </subcellularLocation>
</comment>
<comment type="tissue specificity">
    <text evidence="6">Expressed by the venom gland.</text>
</comment>
<comment type="miscellaneous">
    <text evidence="4">Negative results: does not inhibit vasopressin V2 receptor (V2R/AVPR2).</text>
</comment>
<comment type="similarity">
    <text evidence="5">Belongs to the venom Kunitz-type family.</text>
</comment>
<keyword id="KW-1015">Disulfide bond</keyword>
<keyword id="KW-0646">Protease inhibitor</keyword>
<keyword id="KW-0964">Secreted</keyword>
<keyword id="KW-0722">Serine protease inhibitor</keyword>
<keyword id="KW-0732">Signal</keyword>
<keyword id="KW-0800">Toxin</keyword>